<sequence length="927" mass="103163">MAWLRLQPLTSAFLHFGLVTFVLFLNGLRAEAGDLRDVPSAGQNNESCSGSSDCKEGVILPIWYPENPSLGDKIARVIVYFVALIYMFLGVSIIADRFMASIEVITSQEREVTIKKPNGETSTTTIRVWNETVSNLTLMALGSSAPEILLSLIEVCGHGFIAGDLGPSTIVGSAAFNMFIIIGICVYVIPDGETRKIKHLRVFFVTAAWSVFAYIWLYMILAVFSPGVVQVWEGLLTLFFFPVCVLLAWVADKRLLFYKYMHKRYRTDKHRGIIIETEGEHPKGIEMDGKMMNSHFLDGNLIPLEGKEVDESRREMIRILKDLKQKHPEKDLDQLVEMANYYALSHQQKSRAFYRIQATRMMTGAGNILKKHAAEQAKKTASMSEVHTDEPEDFASKVFFDPCSYQCLENCGAVLLTVVRKGGDISKTMYVDYKTEDGSANAGADYEFTEGTVVLKPGETQKEFSVGIIDDDIFEEDEHFFVRLSNVRVEEEQLEEGMTPAILNSLPLPRAVLASPCVATVTILDDDHAGIFTFECDTIHVSESIGVMEVKVLRTSGARGTVIVPFRTVEGTAKGGGEDFEDTYGELEFKNDETVKTIRVKIVDEEEYERQENFFIALGEPKWMERGISALLLSPEVTDRKLTMEEEEAKRIAEMGKPVLGEHPKLEVIIEESYEFKSTVDKLIKKTNLALVVGTHSWRDQFMEAITVSAAGDEEEDESGEERLPSCFDYVMHFLTVFWKVLFACVPPTEYCHGWACFVVSILIIGMLTAIIGDLASHFGCTIGLKDSVTAVVFVAFGTSVPDTFASKAAALQDVYADASIGNVTGSNAVNVFLGIGLAWSVAAIYWAMQGQEFHVSAGTLAFSVTLFTIFAFVCLSVLLYRRRPHLGGELGGPRGCKLATTWLFVSLWLLYVLFATLEAYCYIKGF</sequence>
<organism>
    <name type="scientific">Rattus norvegicus</name>
    <name type="common">Rat</name>
    <dbReference type="NCBI Taxonomy" id="10116"/>
    <lineage>
        <taxon>Eukaryota</taxon>
        <taxon>Metazoa</taxon>
        <taxon>Chordata</taxon>
        <taxon>Craniata</taxon>
        <taxon>Vertebrata</taxon>
        <taxon>Euteleostomi</taxon>
        <taxon>Mammalia</taxon>
        <taxon>Eutheria</taxon>
        <taxon>Euarchontoglires</taxon>
        <taxon>Glires</taxon>
        <taxon>Rodentia</taxon>
        <taxon>Myomorpha</taxon>
        <taxon>Muroidea</taxon>
        <taxon>Muridae</taxon>
        <taxon>Murinae</taxon>
        <taxon>Rattus</taxon>
    </lineage>
</organism>
<dbReference type="EMBL" id="U53420">
    <property type="protein sequence ID" value="AAC52817.1"/>
    <property type="molecule type" value="mRNA"/>
</dbReference>
<dbReference type="RefSeq" id="NP_511175.1">
    <property type="nucleotide sequence ID" value="NM_078620.2"/>
</dbReference>
<dbReference type="RefSeq" id="XP_017449476.1">
    <property type="nucleotide sequence ID" value="XM_017593987.3"/>
</dbReference>
<dbReference type="RefSeq" id="XP_017449477.1">
    <property type="nucleotide sequence ID" value="XM_017593988.1"/>
</dbReference>
<dbReference type="RefSeq" id="XP_017449478.1">
    <property type="nucleotide sequence ID" value="XM_017593989.1"/>
</dbReference>
<dbReference type="RefSeq" id="XP_017449479.1">
    <property type="nucleotide sequence ID" value="XM_017593990.1"/>
</dbReference>
<dbReference type="RefSeq" id="XP_017449480.1">
    <property type="nucleotide sequence ID" value="XM_017593991.1"/>
</dbReference>
<dbReference type="RefSeq" id="XP_063117559.1">
    <property type="nucleotide sequence ID" value="XM_063261489.1"/>
</dbReference>
<dbReference type="SMR" id="P70549"/>
<dbReference type="FunCoup" id="P70549">
    <property type="interactions" value="3209"/>
</dbReference>
<dbReference type="IntAct" id="P70549">
    <property type="interactions" value="1"/>
</dbReference>
<dbReference type="MINT" id="P70549"/>
<dbReference type="STRING" id="10116.ENSRNOP00000041987"/>
<dbReference type="GlyCosmos" id="P70549">
    <property type="glycosylation" value="2 sites, No reported glycans"/>
</dbReference>
<dbReference type="GlyGen" id="P70549">
    <property type="glycosylation" value="2 sites"/>
</dbReference>
<dbReference type="PhosphoSitePlus" id="P70549"/>
<dbReference type="PaxDb" id="10116-ENSRNOP00000041987"/>
<dbReference type="Ensembl" id="ENSRNOT00000102013.1">
    <property type="protein sequence ID" value="ENSRNOP00000093954.1"/>
    <property type="gene ID" value="ENSRNOG00000029871.5"/>
</dbReference>
<dbReference type="GeneID" id="140448"/>
<dbReference type="KEGG" id="rno:140448"/>
<dbReference type="UCSC" id="RGD:620197">
    <property type="organism name" value="rat"/>
</dbReference>
<dbReference type="AGR" id="RGD:620197"/>
<dbReference type="CTD" id="6547"/>
<dbReference type="RGD" id="620197">
    <property type="gene designation" value="Slc8a3"/>
</dbReference>
<dbReference type="eggNOG" id="KOG1306">
    <property type="taxonomic scope" value="Eukaryota"/>
</dbReference>
<dbReference type="GeneTree" id="ENSGT00940000157547"/>
<dbReference type="HOGENOM" id="CLU_012872_1_0_1"/>
<dbReference type="InParanoid" id="P70549"/>
<dbReference type="OrthoDB" id="418484at2759"/>
<dbReference type="Reactome" id="R-RNO-418359">
    <property type="pathway name" value="Reduction of cytosolic Ca++ levels"/>
</dbReference>
<dbReference type="Reactome" id="R-RNO-425561">
    <property type="pathway name" value="Sodium/Calcium exchangers"/>
</dbReference>
<dbReference type="Reactome" id="R-RNO-5578775">
    <property type="pathway name" value="Ion homeostasis"/>
</dbReference>
<dbReference type="PRO" id="PR:P70549"/>
<dbReference type="Proteomes" id="UP000002494">
    <property type="component" value="Chromosome 6"/>
</dbReference>
<dbReference type="Bgee" id="ENSRNOG00000029871">
    <property type="expression patterns" value="Expressed in quadriceps femoris and 9 other cell types or tissues"/>
</dbReference>
<dbReference type="GO" id="GO:0070161">
    <property type="term" value="C:anchoring junction"/>
    <property type="evidence" value="ECO:0007669"/>
    <property type="project" value="UniProtKB-SubCell"/>
</dbReference>
<dbReference type="GO" id="GO:0030424">
    <property type="term" value="C:axon"/>
    <property type="evidence" value="ECO:0000314"/>
    <property type="project" value="ARUK-UCL"/>
</dbReference>
<dbReference type="GO" id="GO:0043679">
    <property type="term" value="C:axon terminus"/>
    <property type="evidence" value="ECO:0000266"/>
    <property type="project" value="RGD"/>
</dbReference>
<dbReference type="GO" id="GO:0042995">
    <property type="term" value="C:cell projection"/>
    <property type="evidence" value="ECO:0000314"/>
    <property type="project" value="RGD"/>
</dbReference>
<dbReference type="GO" id="GO:0005813">
    <property type="term" value="C:centrosome"/>
    <property type="evidence" value="ECO:0007669"/>
    <property type="project" value="Ensembl"/>
</dbReference>
<dbReference type="GO" id="GO:0005829">
    <property type="term" value="C:cytosol"/>
    <property type="evidence" value="ECO:0007669"/>
    <property type="project" value="Ensembl"/>
</dbReference>
<dbReference type="GO" id="GO:0030425">
    <property type="term" value="C:dendrite"/>
    <property type="evidence" value="ECO:0000314"/>
    <property type="project" value="ARUK-UCL"/>
</dbReference>
<dbReference type="GO" id="GO:0043197">
    <property type="term" value="C:dendritic spine"/>
    <property type="evidence" value="ECO:0000314"/>
    <property type="project" value="RGD"/>
</dbReference>
<dbReference type="GO" id="GO:0005789">
    <property type="term" value="C:endoplasmic reticulum membrane"/>
    <property type="evidence" value="ECO:0000250"/>
    <property type="project" value="UniProtKB"/>
</dbReference>
<dbReference type="GO" id="GO:0005874">
    <property type="term" value="C:microtubule"/>
    <property type="evidence" value="ECO:0000314"/>
    <property type="project" value="RGD"/>
</dbReference>
<dbReference type="GO" id="GO:0005741">
    <property type="term" value="C:mitochondrial outer membrane"/>
    <property type="evidence" value="ECO:0000250"/>
    <property type="project" value="UniProtKB"/>
</dbReference>
<dbReference type="GO" id="GO:0031594">
    <property type="term" value="C:neuromuscular junction"/>
    <property type="evidence" value="ECO:0000250"/>
    <property type="project" value="UniProtKB"/>
</dbReference>
<dbReference type="GO" id="GO:0043025">
    <property type="term" value="C:neuronal cell body"/>
    <property type="evidence" value="ECO:0000314"/>
    <property type="project" value="ARUK-UCL"/>
</dbReference>
<dbReference type="GO" id="GO:0005654">
    <property type="term" value="C:nucleoplasm"/>
    <property type="evidence" value="ECO:0007669"/>
    <property type="project" value="Ensembl"/>
</dbReference>
<dbReference type="GO" id="GO:0043204">
    <property type="term" value="C:perikaryon"/>
    <property type="evidence" value="ECO:0007669"/>
    <property type="project" value="UniProtKB-SubCell"/>
</dbReference>
<dbReference type="GO" id="GO:0048471">
    <property type="term" value="C:perinuclear region of cytoplasm"/>
    <property type="evidence" value="ECO:0000250"/>
    <property type="project" value="UniProtKB"/>
</dbReference>
<dbReference type="GO" id="GO:0005886">
    <property type="term" value="C:plasma membrane"/>
    <property type="evidence" value="ECO:0000250"/>
    <property type="project" value="UniProtKB"/>
</dbReference>
<dbReference type="GO" id="GO:0098794">
    <property type="term" value="C:postsynapse"/>
    <property type="evidence" value="ECO:0000318"/>
    <property type="project" value="GO_Central"/>
</dbReference>
<dbReference type="GO" id="GO:0014069">
    <property type="term" value="C:postsynaptic density"/>
    <property type="evidence" value="ECO:0000266"/>
    <property type="project" value="RGD"/>
</dbReference>
<dbReference type="GO" id="GO:0045211">
    <property type="term" value="C:postsynaptic membrane"/>
    <property type="evidence" value="ECO:0000314"/>
    <property type="project" value="SynGO"/>
</dbReference>
<dbReference type="GO" id="GO:0042383">
    <property type="term" value="C:sarcolemma"/>
    <property type="evidence" value="ECO:0000314"/>
    <property type="project" value="RGD"/>
</dbReference>
<dbReference type="GO" id="GO:0016528">
    <property type="term" value="C:sarcoplasm"/>
    <property type="evidence" value="ECO:0007669"/>
    <property type="project" value="UniProtKB-SubCell"/>
</dbReference>
<dbReference type="GO" id="GO:0045202">
    <property type="term" value="C:synapse"/>
    <property type="evidence" value="ECO:0000266"/>
    <property type="project" value="RGD"/>
</dbReference>
<dbReference type="GO" id="GO:0015368">
    <property type="term" value="F:calcium:monoatomic cation antiporter activity"/>
    <property type="evidence" value="ECO:0000266"/>
    <property type="project" value="RGD"/>
</dbReference>
<dbReference type="GO" id="GO:1905060">
    <property type="term" value="F:calcium:monoatomic cation antiporter activity involved in regulation of postsynaptic cytosolic calcium ion concentration"/>
    <property type="evidence" value="ECO:0000314"/>
    <property type="project" value="SynGO"/>
</dbReference>
<dbReference type="GO" id="GO:0005432">
    <property type="term" value="F:calcium:sodium antiporter activity"/>
    <property type="evidence" value="ECO:0000314"/>
    <property type="project" value="RGD"/>
</dbReference>
<dbReference type="GO" id="GO:0005516">
    <property type="term" value="F:calmodulin binding"/>
    <property type="evidence" value="ECO:0007669"/>
    <property type="project" value="UniProtKB-KW"/>
</dbReference>
<dbReference type="GO" id="GO:0046872">
    <property type="term" value="F:metal ion binding"/>
    <property type="evidence" value="ECO:0007669"/>
    <property type="project" value="UniProtKB-KW"/>
</dbReference>
<dbReference type="GO" id="GO:1990034">
    <property type="term" value="P:calcium ion export across plasma membrane"/>
    <property type="evidence" value="ECO:0000314"/>
    <property type="project" value="RGD"/>
</dbReference>
<dbReference type="GO" id="GO:0098703">
    <property type="term" value="P:calcium ion import across plasma membrane"/>
    <property type="evidence" value="ECO:0000314"/>
    <property type="project" value="RGD"/>
</dbReference>
<dbReference type="GO" id="GO:0070588">
    <property type="term" value="P:calcium ion transmembrane transport"/>
    <property type="evidence" value="ECO:0000316"/>
    <property type="project" value="ARUK-UCL"/>
</dbReference>
<dbReference type="GO" id="GO:0060402">
    <property type="term" value="P:calcium ion transport into cytosol"/>
    <property type="evidence" value="ECO:0000314"/>
    <property type="project" value="RGD"/>
</dbReference>
<dbReference type="GO" id="GO:0007154">
    <property type="term" value="P:cell communication"/>
    <property type="evidence" value="ECO:0007669"/>
    <property type="project" value="InterPro"/>
</dbReference>
<dbReference type="GO" id="GO:0071320">
    <property type="term" value="P:cellular response to cAMP"/>
    <property type="evidence" value="ECO:0000314"/>
    <property type="project" value="RGD"/>
</dbReference>
<dbReference type="GO" id="GO:0071456">
    <property type="term" value="P:cellular response to hypoxia"/>
    <property type="evidence" value="ECO:0000250"/>
    <property type="project" value="UniProtKB"/>
</dbReference>
<dbReference type="GO" id="GO:0002244">
    <property type="term" value="P:hematopoietic progenitor cell differentiation"/>
    <property type="evidence" value="ECO:0000266"/>
    <property type="project" value="RGD"/>
</dbReference>
<dbReference type="GO" id="GO:0006874">
    <property type="term" value="P:intracellular calcium ion homeostasis"/>
    <property type="evidence" value="ECO:0000314"/>
    <property type="project" value="ARUK-UCL"/>
</dbReference>
<dbReference type="GO" id="GO:0007612">
    <property type="term" value="P:learning"/>
    <property type="evidence" value="ECO:0000250"/>
    <property type="project" value="UniProtKB"/>
</dbReference>
<dbReference type="GO" id="GO:0007611">
    <property type="term" value="P:learning or memory"/>
    <property type="evidence" value="ECO:0000266"/>
    <property type="project" value="RGD"/>
</dbReference>
<dbReference type="GO" id="GO:0060291">
    <property type="term" value="P:long-term synaptic potentiation"/>
    <property type="evidence" value="ECO:0000250"/>
    <property type="project" value="UniProtKB"/>
</dbReference>
<dbReference type="GO" id="GO:0007613">
    <property type="term" value="P:memory"/>
    <property type="evidence" value="ECO:0000250"/>
    <property type="project" value="UniProtKB"/>
</dbReference>
<dbReference type="GO" id="GO:0030001">
    <property type="term" value="P:metal ion transport"/>
    <property type="evidence" value="ECO:0000266"/>
    <property type="project" value="RGD"/>
</dbReference>
<dbReference type="GO" id="GO:0051560">
    <property type="term" value="P:mitochondrial calcium ion homeostasis"/>
    <property type="evidence" value="ECO:0000250"/>
    <property type="project" value="UniProtKB"/>
</dbReference>
<dbReference type="GO" id="GO:0006851">
    <property type="term" value="P:mitochondrial calcium ion transmembrane transport"/>
    <property type="evidence" value="ECO:0000250"/>
    <property type="project" value="UniProtKB"/>
</dbReference>
<dbReference type="GO" id="GO:0098815">
    <property type="term" value="P:modulation of excitatory postsynaptic potential"/>
    <property type="evidence" value="ECO:0000266"/>
    <property type="project" value="RGD"/>
</dbReference>
<dbReference type="GO" id="GO:0042552">
    <property type="term" value="P:myelination"/>
    <property type="evidence" value="ECO:0000250"/>
    <property type="project" value="UniProtKB"/>
</dbReference>
<dbReference type="GO" id="GO:1902532">
    <property type="term" value="P:negative regulation of intracellular signal transduction"/>
    <property type="evidence" value="ECO:0007669"/>
    <property type="project" value="Ensembl"/>
</dbReference>
<dbReference type="GO" id="GO:0048709">
    <property type="term" value="P:oligodendrocyte differentiation"/>
    <property type="evidence" value="ECO:0000250"/>
    <property type="project" value="UniProtKB"/>
</dbReference>
<dbReference type="GO" id="GO:0014819">
    <property type="term" value="P:regulation of skeletal muscle contraction"/>
    <property type="evidence" value="ECO:0000250"/>
    <property type="project" value="UniProtKB"/>
</dbReference>
<dbReference type="GO" id="GO:0035725">
    <property type="term" value="P:sodium ion transmembrane transport"/>
    <property type="evidence" value="ECO:0000266"/>
    <property type="project" value="RGD"/>
</dbReference>
<dbReference type="GO" id="GO:0006814">
    <property type="term" value="P:sodium ion transport"/>
    <property type="evidence" value="ECO:0000314"/>
    <property type="project" value="RGD"/>
</dbReference>
<dbReference type="GO" id="GO:0050808">
    <property type="term" value="P:synapse organization"/>
    <property type="evidence" value="ECO:0000266"/>
    <property type="project" value="RGD"/>
</dbReference>
<dbReference type="GO" id="GO:0021537">
    <property type="term" value="P:telencephalon development"/>
    <property type="evidence" value="ECO:0000270"/>
    <property type="project" value="RGD"/>
</dbReference>
<dbReference type="FunFam" id="1.20.1420.30:FF:000001">
    <property type="entry name" value="sodium/calcium exchanger 1 isoform X1"/>
    <property type="match status" value="1"/>
</dbReference>
<dbReference type="FunFam" id="1.20.1420.30:FF:000003">
    <property type="entry name" value="sodium/calcium exchanger 1 isoform X1"/>
    <property type="match status" value="1"/>
</dbReference>
<dbReference type="FunFam" id="2.60.40.2030:FF:000001">
    <property type="entry name" value="sodium/calcium exchanger 1 isoform X1"/>
    <property type="match status" value="1"/>
</dbReference>
<dbReference type="FunFam" id="2.60.40.2030:FF:000002">
    <property type="entry name" value="sodium/calcium exchanger 3 isoform X1"/>
    <property type="match status" value="1"/>
</dbReference>
<dbReference type="Gene3D" id="2.60.40.2030">
    <property type="match status" value="2"/>
</dbReference>
<dbReference type="Gene3D" id="1.20.1420.30">
    <property type="entry name" value="NCX, central ion-binding region"/>
    <property type="match status" value="2"/>
</dbReference>
<dbReference type="InterPro" id="IPR051171">
    <property type="entry name" value="CaCA"/>
</dbReference>
<dbReference type="InterPro" id="IPR038081">
    <property type="entry name" value="CalX-like_sf"/>
</dbReference>
<dbReference type="InterPro" id="IPR003644">
    <property type="entry name" value="Calx_beta"/>
</dbReference>
<dbReference type="InterPro" id="IPR004836">
    <property type="entry name" value="Na_Ca_Ex"/>
</dbReference>
<dbReference type="InterPro" id="IPR032452">
    <property type="entry name" value="Na_Ca_Ex_C-exten"/>
</dbReference>
<dbReference type="InterPro" id="IPR004837">
    <property type="entry name" value="NaCa_Exmemb"/>
</dbReference>
<dbReference type="InterPro" id="IPR044880">
    <property type="entry name" value="NCX_ion-bd_dom_sf"/>
</dbReference>
<dbReference type="NCBIfam" id="TIGR00845">
    <property type="entry name" value="caca"/>
    <property type="match status" value="1"/>
</dbReference>
<dbReference type="PANTHER" id="PTHR11878">
    <property type="entry name" value="SODIUM/CALCIUM EXCHANGER"/>
    <property type="match status" value="1"/>
</dbReference>
<dbReference type="PANTHER" id="PTHR11878:SF7">
    <property type="entry name" value="SODIUM_CALCIUM EXCHANGER 3"/>
    <property type="match status" value="1"/>
</dbReference>
<dbReference type="Pfam" id="PF03160">
    <property type="entry name" value="Calx-beta"/>
    <property type="match status" value="1"/>
</dbReference>
<dbReference type="Pfam" id="PF01699">
    <property type="entry name" value="Na_Ca_ex"/>
    <property type="match status" value="2"/>
</dbReference>
<dbReference type="Pfam" id="PF16494">
    <property type="entry name" value="Na_Ca_ex_C"/>
    <property type="match status" value="1"/>
</dbReference>
<dbReference type="PRINTS" id="PR01259">
    <property type="entry name" value="NACAEXCHNGR"/>
</dbReference>
<dbReference type="SMART" id="SM00237">
    <property type="entry name" value="Calx_beta"/>
    <property type="match status" value="2"/>
</dbReference>
<dbReference type="SUPFAM" id="SSF141072">
    <property type="entry name" value="CalX-like"/>
    <property type="match status" value="2"/>
</dbReference>
<reference key="1">
    <citation type="journal article" date="1996" name="J. Biol. Chem.">
        <title>Cloning of a third mammalian Na+-Ca2+ exchanger, NCX3.</title>
        <authorList>
            <person name="Nicoll D.A."/>
            <person name="Quednau B.D."/>
            <person name="Qui Z."/>
            <person name="Xia Y.-R."/>
            <person name="Lusis A.J."/>
            <person name="Philipson K.D."/>
        </authorList>
    </citation>
    <scope>NUCLEOTIDE SEQUENCE [MRNA]</scope>
    <scope>FUNCTION</scope>
    <scope>SUBCELLULAR LOCATION</scope>
    <scope>TISSUE SPECIFICITY</scope>
    <source>
        <strain>Sprague-Dawley</strain>
        <tissue>Brain</tissue>
    </source>
</reference>
<reference key="2">
    <citation type="journal article" date="1998" name="Am. J. Physiol.">
        <title>Functional comparison of the three isoforms of the Na+/Ca2+ exchanger (NCX1, NCX2, NCX3).</title>
        <authorList>
            <person name="Linck B."/>
            <person name="Qiu Z."/>
            <person name="He Z."/>
            <person name="Tong Q."/>
            <person name="Hilgemann D.W."/>
            <person name="Philipson K.D."/>
        </authorList>
    </citation>
    <scope>FUNCTION</scope>
    <scope>SUBCELLULAR LOCATION</scope>
    <scope>ACTIVITY REGULATION</scope>
</reference>
<reference key="3">
    <citation type="journal article" date="2007" name="Cell Calcium">
        <title>Cellular and subcellular localization of Na+-Ca2+ exchanger protein isoforms, NCX1, NCX2, and NCX3 in cerebral cortex and hippocampus of adult rat.</title>
        <authorList>
            <person name="Minelli A."/>
            <person name="Castaldo P."/>
            <person name="Gobbi P."/>
            <person name="Salucci S."/>
            <person name="Magi S."/>
            <person name="Amoroso S."/>
        </authorList>
    </citation>
    <scope>TISSUE SPECIFICITY</scope>
    <scope>SUBCELLULAR LOCATION</scope>
</reference>
<reference key="4">
    <citation type="journal article" date="2012" name="Cell Death Differ.">
        <title>Silencing or knocking out the Na(+)/Ca(2+) exchanger-3 (NCX3) impairs oligodendrocyte differentiation.</title>
        <authorList>
            <person name="Boscia F."/>
            <person name="D'Avanzo C."/>
            <person name="Pannaccione A."/>
            <person name="Secondo A."/>
            <person name="Casamassa A."/>
            <person name="Formisano L."/>
            <person name="Guida N."/>
            <person name="Sokolow S."/>
            <person name="Herchuelz A."/>
            <person name="Annunziato L."/>
        </authorList>
    </citation>
    <scope>DEVELOPMENTAL STAGE</scope>
</reference>
<reference key="5">
    <citation type="journal article" date="2013" name="Mol. Aspects Med.">
        <title>The SLC8 gene family of sodium-calcium exchangers (NCX) - structure, function, and regulation in health and disease.</title>
        <authorList>
            <person name="Khananshvili D."/>
        </authorList>
    </citation>
    <scope>REVIEW</scope>
</reference>
<protein>
    <recommendedName>
        <fullName>Sodium/calcium exchanger 3</fullName>
    </recommendedName>
    <alternativeName>
        <fullName>Na(+)/Ca(2+)-exchange protein 3</fullName>
    </alternativeName>
    <alternativeName>
        <fullName>Solute carrier family 8 member 3</fullName>
    </alternativeName>
</protein>
<name>NAC3_RAT</name>
<evidence type="ECO:0000250" key="1">
    <source>
        <dbReference type="UniProtKB" id="P23685"/>
    </source>
</evidence>
<evidence type="ECO:0000250" key="2">
    <source>
        <dbReference type="UniProtKB" id="P57103"/>
    </source>
</evidence>
<evidence type="ECO:0000250" key="3">
    <source>
        <dbReference type="UniProtKB" id="S4R2P9"/>
    </source>
</evidence>
<evidence type="ECO:0000255" key="4"/>
<evidence type="ECO:0000269" key="5">
    <source>
    </source>
</evidence>
<evidence type="ECO:0000269" key="6">
    <source>
    </source>
</evidence>
<evidence type="ECO:0000269" key="7">
    <source>
    </source>
</evidence>
<evidence type="ECO:0000269" key="8">
    <source>
    </source>
</evidence>
<evidence type="ECO:0000303" key="9">
    <source>
    </source>
</evidence>
<evidence type="ECO:0000305" key="10"/>
<evidence type="ECO:0000305" key="11">
    <source>
    </source>
</evidence>
<evidence type="ECO:0000305" key="12">
    <source>
    </source>
</evidence>
<proteinExistence type="evidence at protein level"/>
<feature type="signal peptide" evidence="4">
    <location>
        <begin position="1"/>
        <end position="30"/>
    </location>
</feature>
<feature type="chain" id="PRO_0000019385" description="Sodium/calcium exchanger 3">
    <location>
        <begin position="31"/>
        <end position="927"/>
    </location>
</feature>
<feature type="topological domain" description="Extracellular" evidence="4">
    <location>
        <begin position="31"/>
        <end position="73"/>
    </location>
</feature>
<feature type="transmembrane region" description="Helical" evidence="4">
    <location>
        <begin position="74"/>
        <end position="94"/>
    </location>
</feature>
<feature type="topological domain" description="Cytoplasmic" evidence="4">
    <location>
        <begin position="95"/>
        <end position="147"/>
    </location>
</feature>
<feature type="transmembrane region" description="Helical" evidence="4">
    <location>
        <begin position="148"/>
        <end position="168"/>
    </location>
</feature>
<feature type="topological domain" description="Extracellular" evidence="4">
    <location>
        <position position="169"/>
    </location>
</feature>
<feature type="transmembrane region" description="Helical" evidence="4">
    <location>
        <begin position="170"/>
        <end position="190"/>
    </location>
</feature>
<feature type="topological domain" description="Cytoplasmic" evidence="4">
    <location>
        <begin position="191"/>
        <end position="202"/>
    </location>
</feature>
<feature type="transmembrane region" description="Helical" evidence="4">
    <location>
        <begin position="203"/>
        <end position="223"/>
    </location>
</feature>
<feature type="topological domain" description="Extracellular" evidence="4">
    <location>
        <begin position="224"/>
        <end position="230"/>
    </location>
</feature>
<feature type="transmembrane region" description="Helical" evidence="4">
    <location>
        <begin position="231"/>
        <end position="251"/>
    </location>
</feature>
<feature type="topological domain" description="Cytoplasmic" evidence="4">
    <location>
        <begin position="252"/>
        <end position="726"/>
    </location>
</feature>
<feature type="transmembrane region" description="Helical" evidence="4">
    <location>
        <begin position="727"/>
        <end position="747"/>
    </location>
</feature>
<feature type="topological domain" description="Extracellular" evidence="4">
    <location>
        <begin position="748"/>
        <end position="754"/>
    </location>
</feature>
<feature type="transmembrane region" description="Helical" evidence="4">
    <location>
        <begin position="755"/>
        <end position="775"/>
    </location>
</feature>
<feature type="topological domain" description="Cytoplasmic" evidence="4">
    <location>
        <begin position="776"/>
        <end position="778"/>
    </location>
</feature>
<feature type="transmembrane region" description="Helical" evidence="4">
    <location>
        <begin position="779"/>
        <end position="799"/>
    </location>
</feature>
<feature type="topological domain" description="Extracellular" evidence="4">
    <location>
        <begin position="800"/>
        <end position="828"/>
    </location>
</feature>
<feature type="transmembrane region" description="Helical" evidence="4">
    <location>
        <begin position="829"/>
        <end position="849"/>
    </location>
</feature>
<feature type="topological domain" description="Cytoplasmic" evidence="4">
    <location>
        <begin position="850"/>
        <end position="860"/>
    </location>
</feature>
<feature type="transmembrane region" description="Helical" evidence="4">
    <location>
        <begin position="861"/>
        <end position="881"/>
    </location>
</feature>
<feature type="topological domain" description="Extracellular" evidence="4">
    <location>
        <begin position="882"/>
        <end position="903"/>
    </location>
</feature>
<feature type="transmembrane region" description="Helical" evidence="4">
    <location>
        <begin position="904"/>
        <end position="924"/>
    </location>
</feature>
<feature type="topological domain" description="Cytoplasmic" evidence="4">
    <location>
        <begin position="925"/>
        <end position="927"/>
    </location>
</feature>
<feature type="repeat" description="Alpha-1">
    <location>
        <begin position="140"/>
        <end position="180"/>
    </location>
</feature>
<feature type="domain" description="Calx-beta 1">
    <location>
        <begin position="386"/>
        <end position="485"/>
    </location>
</feature>
<feature type="domain" description="Calx-beta 2">
    <location>
        <begin position="519"/>
        <end position="619"/>
    </location>
</feature>
<feature type="repeat" description="Alpha-2">
    <location>
        <begin position="796"/>
        <end position="832"/>
    </location>
</feature>
<feature type="region of interest" description="Putative calmodulin-binding region" evidence="1">
    <location>
        <begin position="253"/>
        <end position="272"/>
    </location>
</feature>
<feature type="binding site" evidence="1">
    <location>
        <position position="409"/>
    </location>
    <ligand>
        <name>Ca(2+)</name>
        <dbReference type="ChEBI" id="CHEBI:29108"/>
        <label>1</label>
    </ligand>
</feature>
<feature type="binding site" evidence="1">
    <location>
        <position position="409"/>
    </location>
    <ligand>
        <name>Ca(2+)</name>
        <dbReference type="ChEBI" id="CHEBI:29108"/>
        <label>2</label>
    </ligand>
</feature>
<feature type="binding site" evidence="1">
    <location>
        <position position="409"/>
    </location>
    <ligand>
        <name>Ca(2+)</name>
        <dbReference type="ChEBI" id="CHEBI:29108"/>
        <label>3</label>
    </ligand>
</feature>
<feature type="binding site" evidence="1">
    <location>
        <position position="445"/>
    </location>
    <ligand>
        <name>Ca(2+)</name>
        <dbReference type="ChEBI" id="CHEBI:29108"/>
        <label>1</label>
    </ligand>
</feature>
<feature type="binding site" evidence="1">
    <location>
        <position position="445"/>
    </location>
    <ligand>
        <name>Ca(2+)</name>
        <dbReference type="ChEBI" id="CHEBI:29108"/>
        <label>4</label>
    </ligand>
</feature>
<feature type="binding site" evidence="1">
    <location>
        <position position="470"/>
    </location>
    <ligand>
        <name>Ca(2+)</name>
        <dbReference type="ChEBI" id="CHEBI:29108"/>
        <label>2</label>
    </ligand>
</feature>
<feature type="binding site" evidence="1">
    <location>
        <position position="471"/>
    </location>
    <ligand>
        <name>Ca(2+)</name>
        <dbReference type="ChEBI" id="CHEBI:29108"/>
        <label>1</label>
    </ligand>
</feature>
<feature type="binding site" evidence="1">
    <location>
        <position position="471"/>
    </location>
    <ligand>
        <name>Ca(2+)</name>
        <dbReference type="ChEBI" id="CHEBI:29108"/>
        <label>2</label>
    </ligand>
</feature>
<feature type="binding site" evidence="1">
    <location>
        <position position="471"/>
    </location>
    <ligand>
        <name>Ca(2+)</name>
        <dbReference type="ChEBI" id="CHEBI:29108"/>
        <label>3</label>
    </ligand>
</feature>
<feature type="binding site" evidence="1">
    <location>
        <position position="471"/>
    </location>
    <ligand>
        <name>Ca(2+)</name>
        <dbReference type="ChEBI" id="CHEBI:29108"/>
        <label>4</label>
    </ligand>
</feature>
<feature type="binding site" evidence="1">
    <location>
        <position position="473"/>
    </location>
    <ligand>
        <name>Ca(2+)</name>
        <dbReference type="ChEBI" id="CHEBI:29108"/>
        <label>3</label>
    </ligand>
</feature>
<feature type="binding site" evidence="1">
    <location>
        <position position="475"/>
    </location>
    <ligand>
        <name>Ca(2+)</name>
        <dbReference type="ChEBI" id="CHEBI:29108"/>
        <label>1</label>
    </ligand>
</feature>
<feature type="binding site" evidence="1">
    <location>
        <position position="475"/>
    </location>
    <ligand>
        <name>Ca(2+)</name>
        <dbReference type="ChEBI" id="CHEBI:29108"/>
        <label>3</label>
    </ligand>
</feature>
<feature type="binding site" evidence="1">
    <location>
        <position position="475"/>
    </location>
    <ligand>
        <name>Ca(2+)</name>
        <dbReference type="ChEBI" id="CHEBI:29108"/>
        <label>4</label>
    </ligand>
</feature>
<feature type="binding site" evidence="1">
    <location>
        <position position="478"/>
    </location>
    <ligand>
        <name>Ca(2+)</name>
        <dbReference type="ChEBI" id="CHEBI:29108"/>
        <label>4</label>
    </ligand>
</feature>
<feature type="binding site" evidence="1">
    <location>
        <position position="525"/>
    </location>
    <ligand>
        <name>Ca(2+)</name>
        <dbReference type="ChEBI" id="CHEBI:29108"/>
        <label>3</label>
    </ligand>
</feature>
<feature type="binding site" evidence="1">
    <location>
        <position position="526"/>
    </location>
    <ligand>
        <name>Ca(2+)</name>
        <dbReference type="ChEBI" id="CHEBI:29108"/>
        <label>2</label>
    </ligand>
</feature>
<feature type="binding site" evidence="1">
    <location>
        <position position="527"/>
    </location>
    <ligand>
        <name>Ca(2+)</name>
        <dbReference type="ChEBI" id="CHEBI:29108"/>
        <label>2</label>
    </ligand>
</feature>
<feature type="binding site" evidence="1">
    <location>
        <position position="527"/>
    </location>
    <ligand>
        <name>Ca(2+)</name>
        <dbReference type="ChEBI" id="CHEBI:29108"/>
        <label>3</label>
    </ligand>
</feature>
<feature type="binding site" evidence="1">
    <location>
        <position position="543"/>
    </location>
    <ligand>
        <name>Ca(2+)</name>
        <dbReference type="ChEBI" id="CHEBI:29108"/>
        <label>5</label>
    </ligand>
</feature>
<feature type="binding site" evidence="1">
    <location>
        <position position="579"/>
    </location>
    <ligand>
        <name>Ca(2+)</name>
        <dbReference type="ChEBI" id="CHEBI:29108"/>
        <label>6</label>
    </ligand>
</feature>
<feature type="binding site" evidence="1">
    <location>
        <position position="606"/>
    </location>
    <ligand>
        <name>Ca(2+)</name>
        <dbReference type="ChEBI" id="CHEBI:29108"/>
        <label>6</label>
    </ligand>
</feature>
<feature type="binding site" evidence="1">
    <location>
        <position position="607"/>
    </location>
    <ligand>
        <name>Ca(2+)</name>
        <dbReference type="ChEBI" id="CHEBI:29108"/>
        <label>5</label>
    </ligand>
</feature>
<feature type="binding site" evidence="1">
    <location>
        <position position="607"/>
    </location>
    <ligand>
        <name>Ca(2+)</name>
        <dbReference type="ChEBI" id="CHEBI:29108"/>
        <label>6</label>
    </ligand>
</feature>
<feature type="binding site" evidence="1">
    <location>
        <position position="672"/>
    </location>
    <ligand>
        <name>Ca(2+)</name>
        <dbReference type="ChEBI" id="CHEBI:29108"/>
        <label>5</label>
    </ligand>
</feature>
<feature type="glycosylation site" description="N-linked (GlcNAc...) asparagine" evidence="4">
    <location>
        <position position="45"/>
    </location>
</feature>
<feature type="glycosylation site" description="N-linked (GlcNAc...) asparagine" evidence="4">
    <location>
        <position position="823"/>
    </location>
</feature>
<keyword id="KW-0050">Antiport</keyword>
<keyword id="KW-0106">Calcium</keyword>
<keyword id="KW-0109">Calcium transport</keyword>
<keyword id="KW-0112">Calmodulin-binding</keyword>
<keyword id="KW-0965">Cell junction</keyword>
<keyword id="KW-1003">Cell membrane</keyword>
<keyword id="KW-0966">Cell projection</keyword>
<keyword id="KW-0963">Cytoplasm</keyword>
<keyword id="KW-0256">Endoplasmic reticulum</keyword>
<keyword id="KW-0325">Glycoprotein</keyword>
<keyword id="KW-0406">Ion transport</keyword>
<keyword id="KW-0472">Membrane</keyword>
<keyword id="KW-0479">Metal-binding</keyword>
<keyword id="KW-0496">Mitochondrion</keyword>
<keyword id="KW-1000">Mitochondrion outer membrane</keyword>
<keyword id="KW-1185">Reference proteome</keyword>
<keyword id="KW-0677">Repeat</keyword>
<keyword id="KW-0732">Signal</keyword>
<keyword id="KW-0915">Sodium</keyword>
<keyword id="KW-0739">Sodium transport</keyword>
<keyword id="KW-0770">Synapse</keyword>
<keyword id="KW-0812">Transmembrane</keyword>
<keyword id="KW-1133">Transmembrane helix</keyword>
<keyword id="KW-0813">Transport</keyword>
<gene>
    <name type="primary">Slc8a3</name>
    <name evidence="9" type="synonym">Ncx3</name>
</gene>
<comment type="function">
    <text evidence="3 7 8">Mediates the electrogenic exchange of Ca(2+) against Na(+) ions across the cell membrane, and thereby contributes to the regulation of cytoplasmic Ca(2+) levels and Ca(2+)-dependent cellular processes (PubMed:8798769, PubMed:9486131). Contributes to cellular Ca(2+) homeostasis in excitable cells, both in muscle and in brain. In a first phase, voltage-gated channels mediate the rapid increase of cytoplasmic Ca(2+) levels due to release of Ca(2+) stores from the endoplasmic reticulum. SLC8A3 mediates the export of Ca(2+) from the cell during the next phase, so that cytoplasmic Ca(2+) levels rapidly return to baseline. Contributes to Ca(2+) transport during excitation-contraction coupling in muscle. In neurons, contributes to the rapid decrease of cytoplasmic Ca(2+) levels back to baseline after neuronal activation, and thereby contributes to modulate synaptic plasticity, learning and memory. Required for normal oligodendrocyte differentiation and for normal myelination. Mediates Ca(2+) efflux from mitochondria and contributes to mitochondrial Ca(2+) ion homeostasis.</text>
</comment>
<comment type="catalytic activity">
    <reaction evidence="11 12">
        <text>Ca(2+)(in) + 3 Na(+)(out) = Ca(2+)(out) + 3 Na(+)(in)</text>
        <dbReference type="Rhea" id="RHEA:69955"/>
        <dbReference type="ChEBI" id="CHEBI:29101"/>
        <dbReference type="ChEBI" id="CHEBI:29108"/>
    </reaction>
</comment>
<comment type="activity regulation">
    <text evidence="8">Calcium transport is down-regulated by Na(+) and stimulated by Ca(2+).</text>
</comment>
<comment type="subunit">
    <text evidence="3">Interacts with AKAP1.</text>
</comment>
<comment type="subcellular location">
    <subcellularLocation>
        <location evidence="5 7 8">Cell membrane</location>
        <topology evidence="10">Multi-pass membrane protein</topology>
    </subcellularLocation>
    <subcellularLocation>
        <location evidence="5">Perikaryon</location>
    </subcellularLocation>
    <subcellularLocation>
        <location evidence="5">Cell projection</location>
        <location evidence="5">Dendrite</location>
    </subcellularLocation>
    <subcellularLocation>
        <location evidence="5">Cell projection</location>
        <location evidence="5">Dendritic spine</location>
    </subcellularLocation>
    <subcellularLocation>
        <location evidence="3">Cell membrane</location>
        <location evidence="3">Sarcolemma</location>
    </subcellularLocation>
    <subcellularLocation>
        <location evidence="3">Cytoplasm</location>
        <location evidence="3">Sarcoplasm</location>
    </subcellularLocation>
    <subcellularLocation>
        <location evidence="3">Cell junction</location>
    </subcellularLocation>
    <subcellularLocation>
        <location evidence="5">Mitochondrion outer membrane</location>
        <topology evidence="3">Multi-pass membrane protein</topology>
    </subcellularLocation>
    <subcellularLocation>
        <location evidence="5">Endoplasmic reticulum membrane</location>
        <topology evidence="3">Multi-pass membrane protein</topology>
    </subcellularLocation>
    <subcellularLocation>
        <location evidence="2">Cytoplasm</location>
        <location evidence="2">Perinuclear region</location>
    </subcellularLocation>
    <text evidence="3">Detected at neuromuscular junctions.</text>
</comment>
<comment type="tissue specificity">
    <text evidence="5 7">Detected in neurons in brain cortex and hippocampus. Detected in pyramidal cell bodies and processes, in granule cells and interneurons in the CA1 and CA3 region of the hippocampus. Detected on astrocyte processes in brain cortex. Detected on endothelial cells in hippocampus capillaries (at protein level) (PubMed:16914199). Restricted to brain and skeletal muscle (PubMed:8798769).</text>
</comment>
<comment type="developmental stage">
    <text evidence="6">Up-regulated during in vitro differentiation of oligodendrocytes (at protein level).</text>
</comment>
<comment type="domain">
    <text evidence="1">The cytoplasmic Calx-beta domains bind the regulatory Ca(2+). The first Calx-beta domain can bind up to four Ca(2+) ions. The second domain can bind another two Ca(2+) ions that are essential for calcium-regulated ion exchange.</text>
</comment>
<comment type="similarity">
    <text evidence="10">Belongs to the Ca(2+):cation antiporter (CaCA) (TC 2.A.19) family. SLC8 subfamily.</text>
</comment>
<accession>P70549</accession>